<gene>
    <name type="primary">VAChT</name>
    <name type="ORF">CG32848</name>
</gene>
<organism>
    <name type="scientific">Drosophila melanogaster</name>
    <name type="common">Fruit fly</name>
    <dbReference type="NCBI Taxonomy" id="7227"/>
    <lineage>
        <taxon>Eukaryota</taxon>
        <taxon>Metazoa</taxon>
        <taxon>Ecdysozoa</taxon>
        <taxon>Arthropoda</taxon>
        <taxon>Hexapoda</taxon>
        <taxon>Insecta</taxon>
        <taxon>Pterygota</taxon>
        <taxon>Neoptera</taxon>
        <taxon>Endopterygota</taxon>
        <taxon>Diptera</taxon>
        <taxon>Brachycera</taxon>
        <taxon>Muscomorpha</taxon>
        <taxon>Ephydroidea</taxon>
        <taxon>Drosophilidae</taxon>
        <taxon>Drosophila</taxon>
        <taxon>Sophophora</taxon>
    </lineage>
</organism>
<sequence>MASFQIPVINLEVREVKDIVWEKIQEPVNQRRLILVIVSIALLLDNMLYMVIVPIIPDYLREIGSFDDGPTPPPLRDNITGKIIPVHHDHHGQDSATGILFASKAIVQLMVNPFSGGLIDKIGYDLPMMIGLTIMFFSTAVFACGSSYSVLFFARSLQGAGSAFADTAGLAMIADRFTEENERSQALGIALAFISFGCLVAPPFGGALYQFAGKEVPFLILALVCLLDGLMLLLVMKPVKEAMKQSKDVQDQVIPIWRLLMDPYIAVCAGALTMSNVALAFLEPTISLWMEDNMTTDNWKIGMVWLPAFFPHVLGVVITVKMARKYPQHQWLMAAGGLALEGFSCFIIPFCSGYKMLMLPICVICFGIALIDTALLPTLGYLVDVRYVSVYGSIYAIADISYSIAYAVGPIIAGGVVEAIGFTALNFLIAFSNLAYVPVLRKLRNIYDFKPFENEANILMQDPPNKEYQTYVMHDQKPVEGGVKNHLEYGQQYQQEQETNLDDQQYEYQQQQQGYQQGYQQDQGYQPGYQEQGGSYAPQGQPRVANPFQQQQQQQQQQQQQVQSRGPAAPANPFRQGF</sequence>
<accession>O17444</accession>
<accession>Q9VE42</accession>
<protein>
    <recommendedName>
        <fullName>Vesicular acetylcholine transporter</fullName>
        <shortName>VAChT</shortName>
    </recommendedName>
</protein>
<feature type="chain" id="PRO_0000127526" description="Vesicular acetylcholine transporter">
    <location>
        <begin position="1"/>
        <end position="578"/>
    </location>
</feature>
<feature type="topological domain" description="Cytoplasmic" evidence="1">
    <location>
        <begin position="1"/>
        <end position="32"/>
    </location>
</feature>
<feature type="transmembrane region" description="Helical" evidence="1">
    <location>
        <begin position="33"/>
        <end position="53"/>
    </location>
</feature>
<feature type="topological domain" description="Lumenal, vesicle" evidence="1">
    <location>
        <begin position="54"/>
        <end position="98"/>
    </location>
</feature>
<feature type="transmembrane region" description="Helical" evidence="1">
    <location>
        <begin position="99"/>
        <end position="119"/>
    </location>
</feature>
<feature type="topological domain" description="Cytoplasmic" evidence="1">
    <location>
        <begin position="120"/>
        <end position="125"/>
    </location>
</feature>
<feature type="transmembrane region" description="Helical" evidence="1">
    <location>
        <begin position="126"/>
        <end position="146"/>
    </location>
</feature>
<feature type="topological domain" description="Lumenal, vesicle" evidence="1">
    <location>
        <begin position="147"/>
        <end position="154"/>
    </location>
</feature>
<feature type="transmembrane region" description="Helical" evidence="1">
    <location>
        <begin position="155"/>
        <end position="175"/>
    </location>
</feature>
<feature type="topological domain" description="Cytoplasmic" evidence="1">
    <location>
        <begin position="176"/>
        <end position="187"/>
    </location>
</feature>
<feature type="transmembrane region" description="Helical" evidence="1">
    <location>
        <begin position="188"/>
        <end position="208"/>
    </location>
</feature>
<feature type="topological domain" description="Lumenal, vesicle" evidence="1">
    <location>
        <begin position="209"/>
        <end position="215"/>
    </location>
</feature>
<feature type="transmembrane region" description="Helical" evidence="1">
    <location>
        <begin position="216"/>
        <end position="236"/>
    </location>
</feature>
<feature type="topological domain" description="Cytoplasmic" evidence="1">
    <location>
        <begin position="237"/>
        <end position="263"/>
    </location>
</feature>
<feature type="transmembrane region" description="Helical" evidence="1">
    <location>
        <begin position="264"/>
        <end position="284"/>
    </location>
</feature>
<feature type="topological domain" description="Lumenal, vesicle" evidence="1">
    <location>
        <begin position="285"/>
        <end position="299"/>
    </location>
</feature>
<feature type="transmembrane region" description="Helical" evidence="1">
    <location>
        <begin position="300"/>
        <end position="320"/>
    </location>
</feature>
<feature type="topological domain" description="Cytoplasmic" evidence="1">
    <location>
        <begin position="321"/>
        <end position="330"/>
    </location>
</feature>
<feature type="transmembrane region" description="Helical" evidence="1">
    <location>
        <begin position="331"/>
        <end position="351"/>
    </location>
</feature>
<feature type="topological domain" description="Lumenal, vesicle" evidence="1">
    <location>
        <begin position="352"/>
        <end position="355"/>
    </location>
</feature>
<feature type="transmembrane region" description="Helical" evidence="1">
    <location>
        <begin position="356"/>
        <end position="376"/>
    </location>
</feature>
<feature type="topological domain" description="Cytoplasmic" evidence="1">
    <location>
        <begin position="377"/>
        <end position="387"/>
    </location>
</feature>
<feature type="transmembrane region" description="Helical" evidence="1">
    <location>
        <begin position="388"/>
        <end position="408"/>
    </location>
</feature>
<feature type="topological domain" description="Lumenal, vesicle" evidence="1">
    <location>
        <begin position="409"/>
        <end position="413"/>
    </location>
</feature>
<feature type="transmembrane region" description="Helical" evidence="1">
    <location>
        <begin position="414"/>
        <end position="434"/>
    </location>
</feature>
<feature type="topological domain" description="Cytoplasmic" evidence="1">
    <location>
        <begin position="435"/>
        <end position="578"/>
    </location>
</feature>
<feature type="region of interest" description="Disordered" evidence="2">
    <location>
        <begin position="507"/>
        <end position="578"/>
    </location>
</feature>
<feature type="compositionally biased region" description="Low complexity" evidence="2">
    <location>
        <begin position="507"/>
        <end position="534"/>
    </location>
</feature>
<feature type="compositionally biased region" description="Low complexity" evidence="2">
    <location>
        <begin position="549"/>
        <end position="563"/>
    </location>
</feature>
<feature type="glycosylation site" description="N-linked (GlcNAc...) asparagine" evidence="1">
    <location>
        <position position="78"/>
    </location>
</feature>
<feature type="glycosylation site" description="N-linked (GlcNAc...) asparagine" evidence="1">
    <location>
        <position position="293"/>
    </location>
</feature>
<feature type="sequence conflict" description="In Ref. 1; AAB86609." evidence="3" ref="1">
    <original>T</original>
    <variation>S</variation>
    <location>
        <position position="97"/>
    </location>
</feature>
<feature type="sequence conflict" description="In Ref. 1; AAB86609." evidence="3" ref="1">
    <original>A</original>
    <variation>V</variation>
    <location>
        <position position="160"/>
    </location>
</feature>
<feature type="sequence conflict" description="In Ref. 1; AAB86609." evidence="3" ref="1">
    <original>L</original>
    <variation>M</variation>
    <location>
        <position position="272"/>
    </location>
</feature>
<proteinExistence type="evidence at transcript level"/>
<reference key="1">
    <citation type="journal article" date="1998" name="J. Biol. Chem.">
        <title>Structure and organization of the Drosophila cholinergic locus.</title>
        <authorList>
            <person name="Kitamoto T."/>
            <person name="Wang W."/>
            <person name="Salvaterra P.M."/>
        </authorList>
    </citation>
    <scope>NUCLEOTIDE SEQUENCE [MRNA]</scope>
    <source>
        <tissue>Head</tissue>
    </source>
</reference>
<reference key="2">
    <citation type="journal article" date="2000" name="Science">
        <title>The genome sequence of Drosophila melanogaster.</title>
        <authorList>
            <person name="Adams M.D."/>
            <person name="Celniker S.E."/>
            <person name="Holt R.A."/>
            <person name="Evans C.A."/>
            <person name="Gocayne J.D."/>
            <person name="Amanatides P.G."/>
            <person name="Scherer S.E."/>
            <person name="Li P.W."/>
            <person name="Hoskins R.A."/>
            <person name="Galle R.F."/>
            <person name="George R.A."/>
            <person name="Lewis S.E."/>
            <person name="Richards S."/>
            <person name="Ashburner M."/>
            <person name="Henderson S.N."/>
            <person name="Sutton G.G."/>
            <person name="Wortman J.R."/>
            <person name="Yandell M.D."/>
            <person name="Zhang Q."/>
            <person name="Chen L.X."/>
            <person name="Brandon R.C."/>
            <person name="Rogers Y.-H.C."/>
            <person name="Blazej R.G."/>
            <person name="Champe M."/>
            <person name="Pfeiffer B.D."/>
            <person name="Wan K.H."/>
            <person name="Doyle C."/>
            <person name="Baxter E.G."/>
            <person name="Helt G."/>
            <person name="Nelson C.R."/>
            <person name="Miklos G.L.G."/>
            <person name="Abril J.F."/>
            <person name="Agbayani A."/>
            <person name="An H.-J."/>
            <person name="Andrews-Pfannkoch C."/>
            <person name="Baldwin D."/>
            <person name="Ballew R.M."/>
            <person name="Basu A."/>
            <person name="Baxendale J."/>
            <person name="Bayraktaroglu L."/>
            <person name="Beasley E.M."/>
            <person name="Beeson K.Y."/>
            <person name="Benos P.V."/>
            <person name="Berman B.P."/>
            <person name="Bhandari D."/>
            <person name="Bolshakov S."/>
            <person name="Borkova D."/>
            <person name="Botchan M.R."/>
            <person name="Bouck J."/>
            <person name="Brokstein P."/>
            <person name="Brottier P."/>
            <person name="Burtis K.C."/>
            <person name="Busam D.A."/>
            <person name="Butler H."/>
            <person name="Cadieu E."/>
            <person name="Center A."/>
            <person name="Chandra I."/>
            <person name="Cherry J.M."/>
            <person name="Cawley S."/>
            <person name="Dahlke C."/>
            <person name="Davenport L.B."/>
            <person name="Davies P."/>
            <person name="de Pablos B."/>
            <person name="Delcher A."/>
            <person name="Deng Z."/>
            <person name="Mays A.D."/>
            <person name="Dew I."/>
            <person name="Dietz S.M."/>
            <person name="Dodson K."/>
            <person name="Doup L.E."/>
            <person name="Downes M."/>
            <person name="Dugan-Rocha S."/>
            <person name="Dunkov B.C."/>
            <person name="Dunn P."/>
            <person name="Durbin K.J."/>
            <person name="Evangelista C.C."/>
            <person name="Ferraz C."/>
            <person name="Ferriera S."/>
            <person name="Fleischmann W."/>
            <person name="Fosler C."/>
            <person name="Gabrielian A.E."/>
            <person name="Garg N.S."/>
            <person name="Gelbart W.M."/>
            <person name="Glasser K."/>
            <person name="Glodek A."/>
            <person name="Gong F."/>
            <person name="Gorrell J.H."/>
            <person name="Gu Z."/>
            <person name="Guan P."/>
            <person name="Harris M."/>
            <person name="Harris N.L."/>
            <person name="Harvey D.A."/>
            <person name="Heiman T.J."/>
            <person name="Hernandez J.R."/>
            <person name="Houck J."/>
            <person name="Hostin D."/>
            <person name="Houston K.A."/>
            <person name="Howland T.J."/>
            <person name="Wei M.-H."/>
            <person name="Ibegwam C."/>
            <person name="Jalali M."/>
            <person name="Kalush F."/>
            <person name="Karpen G.H."/>
            <person name="Ke Z."/>
            <person name="Kennison J.A."/>
            <person name="Ketchum K.A."/>
            <person name="Kimmel B.E."/>
            <person name="Kodira C.D."/>
            <person name="Kraft C.L."/>
            <person name="Kravitz S."/>
            <person name="Kulp D."/>
            <person name="Lai Z."/>
            <person name="Lasko P."/>
            <person name="Lei Y."/>
            <person name="Levitsky A.A."/>
            <person name="Li J.H."/>
            <person name="Li Z."/>
            <person name="Liang Y."/>
            <person name="Lin X."/>
            <person name="Liu X."/>
            <person name="Mattei B."/>
            <person name="McIntosh T.C."/>
            <person name="McLeod M.P."/>
            <person name="McPherson D."/>
            <person name="Merkulov G."/>
            <person name="Milshina N.V."/>
            <person name="Mobarry C."/>
            <person name="Morris J."/>
            <person name="Moshrefi A."/>
            <person name="Mount S.M."/>
            <person name="Moy M."/>
            <person name="Murphy B."/>
            <person name="Murphy L."/>
            <person name="Muzny D.M."/>
            <person name="Nelson D.L."/>
            <person name="Nelson D.R."/>
            <person name="Nelson K.A."/>
            <person name="Nixon K."/>
            <person name="Nusskern D.R."/>
            <person name="Pacleb J.M."/>
            <person name="Palazzolo M."/>
            <person name="Pittman G.S."/>
            <person name="Pan S."/>
            <person name="Pollard J."/>
            <person name="Puri V."/>
            <person name="Reese M.G."/>
            <person name="Reinert K."/>
            <person name="Remington K."/>
            <person name="Saunders R.D.C."/>
            <person name="Scheeler F."/>
            <person name="Shen H."/>
            <person name="Shue B.C."/>
            <person name="Siden-Kiamos I."/>
            <person name="Simpson M."/>
            <person name="Skupski M.P."/>
            <person name="Smith T.J."/>
            <person name="Spier E."/>
            <person name="Spradling A.C."/>
            <person name="Stapleton M."/>
            <person name="Strong R."/>
            <person name="Sun E."/>
            <person name="Svirskas R."/>
            <person name="Tector C."/>
            <person name="Turner R."/>
            <person name="Venter E."/>
            <person name="Wang A.H."/>
            <person name="Wang X."/>
            <person name="Wang Z.-Y."/>
            <person name="Wassarman D.A."/>
            <person name="Weinstock G.M."/>
            <person name="Weissenbach J."/>
            <person name="Williams S.M."/>
            <person name="Woodage T."/>
            <person name="Worley K.C."/>
            <person name="Wu D."/>
            <person name="Yang S."/>
            <person name="Yao Q.A."/>
            <person name="Ye J."/>
            <person name="Yeh R.-F."/>
            <person name="Zaveri J.S."/>
            <person name="Zhan M."/>
            <person name="Zhang G."/>
            <person name="Zhao Q."/>
            <person name="Zheng L."/>
            <person name="Zheng X.H."/>
            <person name="Zhong F.N."/>
            <person name="Zhong W."/>
            <person name="Zhou X."/>
            <person name="Zhu S.C."/>
            <person name="Zhu X."/>
            <person name="Smith H.O."/>
            <person name="Gibbs R.A."/>
            <person name="Myers E.W."/>
            <person name="Rubin G.M."/>
            <person name="Venter J.C."/>
        </authorList>
    </citation>
    <scope>NUCLEOTIDE SEQUENCE [LARGE SCALE GENOMIC DNA]</scope>
    <source>
        <strain>Berkeley</strain>
    </source>
</reference>
<reference key="3">
    <citation type="journal article" date="2002" name="Genome Biol.">
        <title>Annotation of the Drosophila melanogaster euchromatic genome: a systematic review.</title>
        <authorList>
            <person name="Misra S."/>
            <person name="Crosby M.A."/>
            <person name="Mungall C.J."/>
            <person name="Matthews B.B."/>
            <person name="Campbell K.S."/>
            <person name="Hradecky P."/>
            <person name="Huang Y."/>
            <person name="Kaminker J.S."/>
            <person name="Millburn G.H."/>
            <person name="Prochnik S.E."/>
            <person name="Smith C.D."/>
            <person name="Tupy J.L."/>
            <person name="Whitfield E.J."/>
            <person name="Bayraktaroglu L."/>
            <person name="Berman B.P."/>
            <person name="Bettencourt B.R."/>
            <person name="Celniker S.E."/>
            <person name="de Grey A.D.N.J."/>
            <person name="Drysdale R.A."/>
            <person name="Harris N.L."/>
            <person name="Richter J."/>
            <person name="Russo S."/>
            <person name="Schroeder A.J."/>
            <person name="Shu S.Q."/>
            <person name="Stapleton M."/>
            <person name="Yamada C."/>
            <person name="Ashburner M."/>
            <person name="Gelbart W.M."/>
            <person name="Rubin G.M."/>
            <person name="Lewis S.E."/>
        </authorList>
    </citation>
    <scope>GENOME REANNOTATION</scope>
    <source>
        <strain>Berkeley</strain>
    </source>
</reference>
<evidence type="ECO:0000255" key="1"/>
<evidence type="ECO:0000256" key="2">
    <source>
        <dbReference type="SAM" id="MobiDB-lite"/>
    </source>
</evidence>
<evidence type="ECO:0000305" key="3"/>
<keyword id="KW-0325">Glycoprotein</keyword>
<keyword id="KW-0472">Membrane</keyword>
<keyword id="KW-0532">Neurotransmitter transport</keyword>
<keyword id="KW-1185">Reference proteome</keyword>
<keyword id="KW-0812">Transmembrane</keyword>
<keyword id="KW-1133">Transmembrane helix</keyword>
<keyword id="KW-0813">Transport</keyword>
<comment type="function">
    <text>Involved in acetylcholine transport into synaptic vesicles.</text>
</comment>
<comment type="subcellular location">
    <subcellularLocation>
        <location>Membrane</location>
        <topology>Multi-pass membrane protein</topology>
    </subcellularLocation>
</comment>
<comment type="similarity">
    <text evidence="3">Belongs to the major facilitator superfamily. Vesicular transporter family.</text>
</comment>
<dbReference type="EMBL" id="AF030197">
    <property type="protein sequence ID" value="AAB86609.1"/>
    <property type="molecule type" value="mRNA"/>
</dbReference>
<dbReference type="EMBL" id="AE014297">
    <property type="protein sequence ID" value="AAF55587.2"/>
    <property type="molecule type" value="Genomic_DNA"/>
</dbReference>
<dbReference type="RefSeq" id="NP_477138.1">
    <property type="nucleotide sequence ID" value="NM_057790.5"/>
</dbReference>
<dbReference type="SMR" id="O17444"/>
<dbReference type="FunCoup" id="O17444">
    <property type="interactions" value="10"/>
</dbReference>
<dbReference type="IntAct" id="O17444">
    <property type="interactions" value="2"/>
</dbReference>
<dbReference type="STRING" id="7227.FBpp0083086"/>
<dbReference type="GlyCosmos" id="O17444">
    <property type="glycosylation" value="2 sites, No reported glycans"/>
</dbReference>
<dbReference type="GlyGen" id="O17444">
    <property type="glycosylation" value="3 sites"/>
</dbReference>
<dbReference type="PaxDb" id="7227-FBpp0083086"/>
<dbReference type="DNASU" id="42795"/>
<dbReference type="EnsemblMetazoa" id="FBtr0083671">
    <property type="protein sequence ID" value="FBpp0083086"/>
    <property type="gene ID" value="FBgn0270928"/>
</dbReference>
<dbReference type="GeneID" id="42795"/>
<dbReference type="KEGG" id="dme:Dmel_CG32848"/>
<dbReference type="UCSC" id="CG32848-RA">
    <property type="organism name" value="d. melanogaster"/>
</dbReference>
<dbReference type="AGR" id="FB:FBgn0270928"/>
<dbReference type="CTD" id="42795"/>
<dbReference type="FlyBase" id="FBgn0270928">
    <property type="gene designation" value="VAChT"/>
</dbReference>
<dbReference type="VEuPathDB" id="VectorBase:FBgn0270928"/>
<dbReference type="eggNOG" id="KOG3764">
    <property type="taxonomic scope" value="Eukaryota"/>
</dbReference>
<dbReference type="GeneTree" id="ENSGT00940000159449"/>
<dbReference type="HOGENOM" id="CLU_001265_10_9_1"/>
<dbReference type="InParanoid" id="O17444"/>
<dbReference type="OMA" id="TRTPEVW"/>
<dbReference type="OrthoDB" id="5086884at2759"/>
<dbReference type="PhylomeDB" id="O17444"/>
<dbReference type="Reactome" id="R-DME-264642">
    <property type="pathway name" value="Acetylcholine Neurotransmitter Release Cycle"/>
</dbReference>
<dbReference type="Reactome" id="R-DME-8856825">
    <property type="pathway name" value="Cargo recognition for clathrin-mediated endocytosis"/>
</dbReference>
<dbReference type="Reactome" id="R-DME-8856828">
    <property type="pathway name" value="Clathrin-mediated endocytosis"/>
</dbReference>
<dbReference type="BioGRID-ORCS" id="42795">
    <property type="hits" value="0 hits in 1 CRISPR screen"/>
</dbReference>
<dbReference type="GenomeRNAi" id="42795"/>
<dbReference type="PRO" id="PR:O17444"/>
<dbReference type="Proteomes" id="UP000000803">
    <property type="component" value="Chromosome 3R"/>
</dbReference>
<dbReference type="Bgee" id="FBgn0270928">
    <property type="expression patterns" value="Expressed in lamina monopolar neuron L2 (Drosophila) in brain and 162 other cell types or tissues"/>
</dbReference>
<dbReference type="ExpressionAtlas" id="O17444">
    <property type="expression patterns" value="baseline and differential"/>
</dbReference>
<dbReference type="GO" id="GO:0030121">
    <property type="term" value="C:AP-1 adaptor complex"/>
    <property type="evidence" value="ECO:0000318"/>
    <property type="project" value="GO_Central"/>
</dbReference>
<dbReference type="GO" id="GO:0030122">
    <property type="term" value="C:AP-2 adaptor complex"/>
    <property type="evidence" value="ECO:0000318"/>
    <property type="project" value="GO_Central"/>
</dbReference>
<dbReference type="GO" id="GO:0043195">
    <property type="term" value="C:terminal bouton"/>
    <property type="evidence" value="ECO:0000314"/>
    <property type="project" value="FlyBase"/>
</dbReference>
<dbReference type="GO" id="GO:0005277">
    <property type="term" value="F:acetylcholine transmembrane transporter activity"/>
    <property type="evidence" value="ECO:0000318"/>
    <property type="project" value="GO_Central"/>
</dbReference>
<dbReference type="GO" id="GO:0042910">
    <property type="term" value="F:xenobiotic transmembrane transporter activity"/>
    <property type="evidence" value="ECO:0007669"/>
    <property type="project" value="InterPro"/>
</dbReference>
<dbReference type="GO" id="GO:0007268">
    <property type="term" value="P:chemical synaptic transmission"/>
    <property type="evidence" value="ECO:0000318"/>
    <property type="project" value="GO_Central"/>
</dbReference>
<dbReference type="CDD" id="cd17383">
    <property type="entry name" value="MFS_SLC18A3_VAChT"/>
    <property type="match status" value="1"/>
</dbReference>
<dbReference type="FunFam" id="1.20.1250.20:FF:000109">
    <property type="entry name" value="Putative vesicular acetylcholine transporter"/>
    <property type="match status" value="1"/>
</dbReference>
<dbReference type="Gene3D" id="1.20.1250.20">
    <property type="entry name" value="MFS general substrate transporter like domains"/>
    <property type="match status" value="1"/>
</dbReference>
<dbReference type="InterPro" id="IPR011701">
    <property type="entry name" value="MFS"/>
</dbReference>
<dbReference type="InterPro" id="IPR020846">
    <property type="entry name" value="MFS_dom"/>
</dbReference>
<dbReference type="InterPro" id="IPR036259">
    <property type="entry name" value="MFS_trans_sf"/>
</dbReference>
<dbReference type="InterPro" id="IPR050930">
    <property type="entry name" value="MFS_Vesicular_Transporter"/>
</dbReference>
<dbReference type="InterPro" id="IPR004734">
    <property type="entry name" value="Multidrug-R"/>
</dbReference>
<dbReference type="NCBIfam" id="TIGR00880">
    <property type="entry name" value="2_A_01_02"/>
    <property type="match status" value="1"/>
</dbReference>
<dbReference type="PANTHER" id="PTHR23506">
    <property type="entry name" value="GH10249P"/>
    <property type="match status" value="1"/>
</dbReference>
<dbReference type="PANTHER" id="PTHR23506:SF13">
    <property type="entry name" value="VESICULAR ACETYLCHOLINE TRANSPORTER"/>
    <property type="match status" value="1"/>
</dbReference>
<dbReference type="Pfam" id="PF07690">
    <property type="entry name" value="MFS_1"/>
    <property type="match status" value="1"/>
</dbReference>
<dbReference type="SUPFAM" id="SSF103473">
    <property type="entry name" value="MFS general substrate transporter"/>
    <property type="match status" value="1"/>
</dbReference>
<dbReference type="PROSITE" id="PS50850">
    <property type="entry name" value="MFS"/>
    <property type="match status" value="1"/>
</dbReference>
<name>VACHT_DROME</name>